<reference key="1">
    <citation type="journal article" date="2008" name="Environ. Microbiol.">
        <title>The genome of Erwinia tasmaniensis strain Et1/99, a non-pathogenic bacterium in the genus Erwinia.</title>
        <authorList>
            <person name="Kube M."/>
            <person name="Migdoll A.M."/>
            <person name="Mueller I."/>
            <person name="Kuhl H."/>
            <person name="Beck A."/>
            <person name="Reinhardt R."/>
            <person name="Geider K."/>
        </authorList>
    </citation>
    <scope>NUCLEOTIDE SEQUENCE [LARGE SCALE GENOMIC DNA]</scope>
    <source>
        <strain>DSM 17950 / CFBP 7177 / CIP 109463 / NCPPB 4357 / Et1/99</strain>
    </source>
</reference>
<name>DAPF_ERWT9</name>
<organism>
    <name type="scientific">Erwinia tasmaniensis (strain DSM 17950 / CFBP 7177 / CIP 109463 / NCPPB 4357 / Et1/99)</name>
    <dbReference type="NCBI Taxonomy" id="465817"/>
    <lineage>
        <taxon>Bacteria</taxon>
        <taxon>Pseudomonadati</taxon>
        <taxon>Pseudomonadota</taxon>
        <taxon>Gammaproteobacteria</taxon>
        <taxon>Enterobacterales</taxon>
        <taxon>Erwiniaceae</taxon>
        <taxon>Erwinia</taxon>
    </lineage>
</organism>
<proteinExistence type="inferred from homology"/>
<accession>B2VI49</accession>
<feature type="chain" id="PRO_1000099236" description="Diaminopimelate epimerase">
    <location>
        <begin position="1"/>
        <end position="274"/>
    </location>
</feature>
<feature type="active site" description="Proton donor" evidence="1">
    <location>
        <position position="73"/>
    </location>
</feature>
<feature type="active site" description="Proton acceptor" evidence="1">
    <location>
        <position position="217"/>
    </location>
</feature>
<feature type="binding site" evidence="1">
    <location>
        <position position="11"/>
    </location>
    <ligand>
        <name>substrate</name>
    </ligand>
</feature>
<feature type="binding site" evidence="1">
    <location>
        <position position="44"/>
    </location>
    <ligand>
        <name>substrate</name>
    </ligand>
</feature>
<feature type="binding site" evidence="1">
    <location>
        <position position="64"/>
    </location>
    <ligand>
        <name>substrate</name>
    </ligand>
</feature>
<feature type="binding site" evidence="1">
    <location>
        <begin position="74"/>
        <end position="75"/>
    </location>
    <ligand>
        <name>substrate</name>
    </ligand>
</feature>
<feature type="binding site" evidence="1">
    <location>
        <position position="157"/>
    </location>
    <ligand>
        <name>substrate</name>
    </ligand>
</feature>
<feature type="binding site" evidence="1">
    <location>
        <position position="190"/>
    </location>
    <ligand>
        <name>substrate</name>
    </ligand>
</feature>
<feature type="binding site" evidence="1">
    <location>
        <begin position="208"/>
        <end position="209"/>
    </location>
    <ligand>
        <name>substrate</name>
    </ligand>
</feature>
<feature type="binding site" evidence="1">
    <location>
        <begin position="218"/>
        <end position="219"/>
    </location>
    <ligand>
        <name>substrate</name>
    </ligand>
</feature>
<feature type="site" description="Could be important to modulate the pK values of the two catalytic cysteine residues" evidence="1">
    <location>
        <position position="159"/>
    </location>
</feature>
<feature type="site" description="Could be important to modulate the pK values of the two catalytic cysteine residues" evidence="1">
    <location>
        <position position="208"/>
    </location>
</feature>
<feature type="site" description="Important for dimerization" evidence="1">
    <location>
        <position position="268"/>
    </location>
</feature>
<gene>
    <name evidence="1" type="primary">dapF</name>
    <name type="ordered locus">ETA_02150</name>
</gene>
<protein>
    <recommendedName>
        <fullName evidence="1">Diaminopimelate epimerase</fullName>
        <shortName evidence="1">DAP epimerase</shortName>
        <ecNumber evidence="1">5.1.1.7</ecNumber>
    </recommendedName>
    <alternativeName>
        <fullName evidence="1">PLP-independent amino acid racemase</fullName>
    </alternativeName>
</protein>
<sequence length="274" mass="30293">MQFSKMHGLGNDFMVVDAVTQNVYFSPELIRRLADRHLGIGFDQLLIVEPPYDPDLDFHYRIFNADGSEVAQCGNGARCFARFVRLKGLTNKNEIRVSTQSGRMVLSITQDELVCVNMGEPNFEPQQIPFRANKAENIYLMRAAEQTVMCGVVSMGNPHCVLQVDNVKTAAVETLGPVLESHERFPERVNVGFMEVVHREHIRLRVYERGAGETQACGSGACAAVAVGIQQASLAEKVRVDLPGGSLHIAWKGPGHPLYMTGPATHVYDGFIHL</sequence>
<comment type="function">
    <text evidence="1">Catalyzes the stereoinversion of LL-2,6-diaminopimelate (L,L-DAP) to meso-diaminopimelate (meso-DAP), a precursor of L-lysine and an essential component of the bacterial peptidoglycan.</text>
</comment>
<comment type="catalytic activity">
    <reaction evidence="1">
        <text>(2S,6S)-2,6-diaminopimelate = meso-2,6-diaminopimelate</text>
        <dbReference type="Rhea" id="RHEA:15393"/>
        <dbReference type="ChEBI" id="CHEBI:57609"/>
        <dbReference type="ChEBI" id="CHEBI:57791"/>
        <dbReference type="EC" id="5.1.1.7"/>
    </reaction>
</comment>
<comment type="pathway">
    <text evidence="1">Amino-acid biosynthesis; L-lysine biosynthesis via DAP pathway; DL-2,6-diaminopimelate from LL-2,6-diaminopimelate: step 1/1.</text>
</comment>
<comment type="subunit">
    <text evidence="1">Homodimer.</text>
</comment>
<comment type="subcellular location">
    <subcellularLocation>
        <location evidence="1">Cytoplasm</location>
    </subcellularLocation>
</comment>
<comment type="similarity">
    <text evidence="1">Belongs to the diaminopimelate epimerase family.</text>
</comment>
<keyword id="KW-0028">Amino-acid biosynthesis</keyword>
<keyword id="KW-0963">Cytoplasm</keyword>
<keyword id="KW-0413">Isomerase</keyword>
<keyword id="KW-0457">Lysine biosynthesis</keyword>
<keyword id="KW-1185">Reference proteome</keyword>
<dbReference type="EC" id="5.1.1.7" evidence="1"/>
<dbReference type="EMBL" id="CU468135">
    <property type="protein sequence ID" value="CAO95261.1"/>
    <property type="molecule type" value="Genomic_DNA"/>
</dbReference>
<dbReference type="RefSeq" id="WP_012439981.1">
    <property type="nucleotide sequence ID" value="NC_010694.1"/>
</dbReference>
<dbReference type="SMR" id="B2VI49"/>
<dbReference type="STRING" id="465817.ETA_02150"/>
<dbReference type="KEGG" id="eta:ETA_02150"/>
<dbReference type="eggNOG" id="COG0253">
    <property type="taxonomic scope" value="Bacteria"/>
</dbReference>
<dbReference type="HOGENOM" id="CLU_053306_1_1_6"/>
<dbReference type="OrthoDB" id="9805408at2"/>
<dbReference type="UniPathway" id="UPA00034">
    <property type="reaction ID" value="UER00025"/>
</dbReference>
<dbReference type="Proteomes" id="UP000001726">
    <property type="component" value="Chromosome"/>
</dbReference>
<dbReference type="GO" id="GO:0005829">
    <property type="term" value="C:cytosol"/>
    <property type="evidence" value="ECO:0007669"/>
    <property type="project" value="TreeGrafter"/>
</dbReference>
<dbReference type="GO" id="GO:0008837">
    <property type="term" value="F:diaminopimelate epimerase activity"/>
    <property type="evidence" value="ECO:0007669"/>
    <property type="project" value="UniProtKB-UniRule"/>
</dbReference>
<dbReference type="GO" id="GO:0009089">
    <property type="term" value="P:lysine biosynthetic process via diaminopimelate"/>
    <property type="evidence" value="ECO:0007669"/>
    <property type="project" value="UniProtKB-UniRule"/>
</dbReference>
<dbReference type="FunFam" id="3.10.310.10:FF:000001">
    <property type="entry name" value="Diaminopimelate epimerase"/>
    <property type="match status" value="1"/>
</dbReference>
<dbReference type="FunFam" id="3.10.310.10:FF:000002">
    <property type="entry name" value="Diaminopimelate epimerase"/>
    <property type="match status" value="1"/>
</dbReference>
<dbReference type="Gene3D" id="3.10.310.10">
    <property type="entry name" value="Diaminopimelate Epimerase, Chain A, domain 1"/>
    <property type="match status" value="2"/>
</dbReference>
<dbReference type="HAMAP" id="MF_00197">
    <property type="entry name" value="DAP_epimerase"/>
    <property type="match status" value="1"/>
</dbReference>
<dbReference type="InterPro" id="IPR018510">
    <property type="entry name" value="DAP_epimerase_AS"/>
</dbReference>
<dbReference type="InterPro" id="IPR001653">
    <property type="entry name" value="DAP_epimerase_DapF"/>
</dbReference>
<dbReference type="NCBIfam" id="TIGR00652">
    <property type="entry name" value="DapF"/>
    <property type="match status" value="1"/>
</dbReference>
<dbReference type="PANTHER" id="PTHR31689:SF0">
    <property type="entry name" value="DIAMINOPIMELATE EPIMERASE"/>
    <property type="match status" value="1"/>
</dbReference>
<dbReference type="PANTHER" id="PTHR31689">
    <property type="entry name" value="DIAMINOPIMELATE EPIMERASE, CHLOROPLASTIC"/>
    <property type="match status" value="1"/>
</dbReference>
<dbReference type="Pfam" id="PF01678">
    <property type="entry name" value="DAP_epimerase"/>
    <property type="match status" value="2"/>
</dbReference>
<dbReference type="SUPFAM" id="SSF54506">
    <property type="entry name" value="Diaminopimelate epimerase-like"/>
    <property type="match status" value="1"/>
</dbReference>
<dbReference type="PROSITE" id="PS01326">
    <property type="entry name" value="DAP_EPIMERASE"/>
    <property type="match status" value="1"/>
</dbReference>
<evidence type="ECO:0000255" key="1">
    <source>
        <dbReference type="HAMAP-Rule" id="MF_00197"/>
    </source>
</evidence>